<comment type="function">
    <text evidence="1">Involved in retrograde transport of recycling endosomes.</text>
</comment>
<comment type="subcellular location">
    <subcellularLocation>
        <location evidence="1">Recycling endosome membrane</location>
        <topology>Peripheral membrane protein</topology>
    </subcellularLocation>
    <text evidence="1">Specifically detected in tubulovesicular structures, and colocalizes with TFNR.</text>
</comment>
<comment type="domain">
    <text evidence="1">The PH domain specifically binds phosphatidylserine, which is enriched in recycling endosome membranes, it doesn't recognize PIPs.</text>
</comment>
<dbReference type="EMBL" id="CR860290">
    <property type="protein sequence ID" value="CAH92430.1"/>
    <property type="molecule type" value="mRNA"/>
</dbReference>
<dbReference type="EMBL" id="CR861240">
    <property type="protein sequence ID" value="CAH93310.1"/>
    <property type="molecule type" value="mRNA"/>
</dbReference>
<dbReference type="RefSeq" id="NP_001126433.1">
    <property type="nucleotide sequence ID" value="NM_001132961.1"/>
</dbReference>
<dbReference type="RefSeq" id="XP_009235868.1">
    <property type="nucleotide sequence ID" value="XM_009237593.1"/>
</dbReference>
<dbReference type="RefSeq" id="XP_054404680.1">
    <property type="nucleotide sequence ID" value="XM_054548705.2"/>
</dbReference>
<dbReference type="RefSeq" id="XP_054404681.1">
    <property type="nucleotide sequence ID" value="XM_054548706.2"/>
</dbReference>
<dbReference type="RefSeq" id="XP_054404682.1">
    <property type="nucleotide sequence ID" value="XM_054548707.2"/>
</dbReference>
<dbReference type="RefSeq" id="XP_054404683.1">
    <property type="nucleotide sequence ID" value="XM_054548708.2"/>
</dbReference>
<dbReference type="SMR" id="Q5R4K6"/>
<dbReference type="FunCoup" id="Q5R4K6">
    <property type="interactions" value="515"/>
</dbReference>
<dbReference type="GeneID" id="100173417"/>
<dbReference type="KEGG" id="pon:100173417"/>
<dbReference type="CTD" id="55041"/>
<dbReference type="eggNOG" id="ENOG502S9ZQ">
    <property type="taxonomic scope" value="Eukaryota"/>
</dbReference>
<dbReference type="HOGENOM" id="CLU_102020_0_0_1"/>
<dbReference type="InParanoid" id="Q5R4K6"/>
<dbReference type="OrthoDB" id="2157866at2759"/>
<dbReference type="TreeFam" id="TF331787"/>
<dbReference type="Proteomes" id="UP000001595">
    <property type="component" value="Unplaced"/>
</dbReference>
<dbReference type="GO" id="GO:0055038">
    <property type="term" value="C:recycling endosome membrane"/>
    <property type="evidence" value="ECO:0007669"/>
    <property type="project" value="UniProtKB-SubCell"/>
</dbReference>
<dbReference type="GO" id="GO:0045595">
    <property type="term" value="P:regulation of cell differentiation"/>
    <property type="evidence" value="ECO:0007669"/>
    <property type="project" value="TreeGrafter"/>
</dbReference>
<dbReference type="CDD" id="cd13265">
    <property type="entry name" value="PH_evt"/>
    <property type="match status" value="1"/>
</dbReference>
<dbReference type="FunFam" id="2.30.29.30:FF:000073">
    <property type="entry name" value="Pleckstrin homology domain-containing family B member 2"/>
    <property type="match status" value="1"/>
</dbReference>
<dbReference type="Gene3D" id="2.30.29.30">
    <property type="entry name" value="Pleckstrin-homology domain (PH domain)/Phosphotyrosine-binding domain (PTB)"/>
    <property type="match status" value="1"/>
</dbReference>
<dbReference type="InterPro" id="IPR011993">
    <property type="entry name" value="PH-like_dom_sf"/>
</dbReference>
<dbReference type="InterPro" id="IPR001849">
    <property type="entry name" value="PH_domain"/>
</dbReference>
<dbReference type="InterPro" id="IPR039680">
    <property type="entry name" value="PLEKHB1/2"/>
</dbReference>
<dbReference type="PANTHER" id="PTHR14309">
    <property type="entry name" value="EXPRESSED PROTEIN"/>
    <property type="match status" value="1"/>
</dbReference>
<dbReference type="PANTHER" id="PTHR14309:SF8">
    <property type="entry name" value="PLECKSTRIN HOMOLOGY DOMAIN-CONTAINING FAMILY B MEMBER 2"/>
    <property type="match status" value="1"/>
</dbReference>
<dbReference type="Pfam" id="PF00169">
    <property type="entry name" value="PH"/>
    <property type="match status" value="1"/>
</dbReference>
<dbReference type="SMART" id="SM00233">
    <property type="entry name" value="PH"/>
    <property type="match status" value="1"/>
</dbReference>
<dbReference type="SUPFAM" id="SSF50729">
    <property type="entry name" value="PH domain-like"/>
    <property type="match status" value="1"/>
</dbReference>
<dbReference type="PROSITE" id="PS50003">
    <property type="entry name" value="PH_DOMAIN"/>
    <property type="match status" value="1"/>
</dbReference>
<organism>
    <name type="scientific">Pongo abelii</name>
    <name type="common">Sumatran orangutan</name>
    <name type="synonym">Pongo pygmaeus abelii</name>
    <dbReference type="NCBI Taxonomy" id="9601"/>
    <lineage>
        <taxon>Eukaryota</taxon>
        <taxon>Metazoa</taxon>
        <taxon>Chordata</taxon>
        <taxon>Craniata</taxon>
        <taxon>Vertebrata</taxon>
        <taxon>Euteleostomi</taxon>
        <taxon>Mammalia</taxon>
        <taxon>Eutheria</taxon>
        <taxon>Euarchontoglires</taxon>
        <taxon>Primates</taxon>
        <taxon>Haplorrhini</taxon>
        <taxon>Catarrhini</taxon>
        <taxon>Hominidae</taxon>
        <taxon>Pongo</taxon>
    </lineage>
</organism>
<keyword id="KW-0967">Endosome</keyword>
<keyword id="KW-0472">Membrane</keyword>
<keyword id="KW-1185">Reference proteome</keyword>
<accession>Q5R4K6</accession>
<name>PKHB2_PONAB</name>
<feature type="chain" id="PRO_0000253638" description="Pleckstrin homology domain-containing family B member 2">
    <location>
        <begin position="1"/>
        <end position="222"/>
    </location>
</feature>
<feature type="domain" description="PH" evidence="2">
    <location>
        <begin position="2"/>
        <end position="109"/>
    </location>
</feature>
<feature type="binding site" evidence="1">
    <location>
        <position position="20"/>
    </location>
    <ligand>
        <name>a 1,2-diacyl-sn-glycero-3-phospho-L-serine</name>
        <dbReference type="ChEBI" id="CHEBI:57262"/>
    </ligand>
</feature>
<proteinExistence type="evidence at transcript level"/>
<protein>
    <recommendedName>
        <fullName>Pleckstrin homology domain-containing family B member 2</fullName>
        <shortName>PH domain-containing family B member 2</shortName>
    </recommendedName>
    <alternativeName>
        <fullName>Evectin-2</fullName>
    </alternativeName>
</protein>
<gene>
    <name type="primary">PLEKHB2</name>
    <name type="synonym">EVT2</name>
</gene>
<reference key="1">
    <citation type="submission" date="2004-11" db="EMBL/GenBank/DDBJ databases">
        <authorList>
            <consortium name="The German cDNA consortium"/>
        </authorList>
    </citation>
    <scope>NUCLEOTIDE SEQUENCE [LARGE SCALE MRNA]</scope>
    <source>
        <tissue>Brain cortex</tissue>
    </source>
</reference>
<evidence type="ECO:0000250" key="1"/>
<evidence type="ECO:0000255" key="2">
    <source>
        <dbReference type="PROSITE-ProRule" id="PRU00145"/>
    </source>
</evidence>
<sequence>MAFVKSGWLLRQSTILKRWKKNWFDLWSDGHLIYYDDQTRQNIEDKVHMPVDCINIRTGQECRDIQPPDGKSKDCMLQIVCRDGKTISLCAESTDDCLAWKFTLQDSRTNTAYVGSAVMTDETSMVSSPPPYTAYAAPAPEQAYGYGPYGGAYPPGTQVVYAANGQAYAVPYQYPYAGLYGQQPANQVIIRERYRDNDSDLALGMLAGAATGMALGSLFWVF</sequence>